<feature type="chain" id="PRO_0000229473" description="GMP synthase [glutamine-hydrolyzing]">
    <location>
        <begin position="1"/>
        <end position="513"/>
    </location>
</feature>
<feature type="domain" description="Glutamine amidotransferase type-1" evidence="1">
    <location>
        <begin position="9"/>
        <end position="198"/>
    </location>
</feature>
<feature type="domain" description="GMPS ATP-PPase" evidence="1">
    <location>
        <begin position="199"/>
        <end position="388"/>
    </location>
</feature>
<feature type="active site" description="Nucleophile" evidence="1">
    <location>
        <position position="86"/>
    </location>
</feature>
<feature type="active site" evidence="1">
    <location>
        <position position="172"/>
    </location>
</feature>
<feature type="active site" evidence="1">
    <location>
        <position position="174"/>
    </location>
</feature>
<feature type="binding site" evidence="1">
    <location>
        <begin position="226"/>
        <end position="232"/>
    </location>
    <ligand>
        <name>ATP</name>
        <dbReference type="ChEBI" id="CHEBI:30616"/>
    </ligand>
</feature>
<dbReference type="EC" id="6.3.5.2" evidence="1"/>
<dbReference type="EMBL" id="AP008934">
    <property type="protein sequence ID" value="BAE19467.1"/>
    <property type="molecule type" value="Genomic_DNA"/>
</dbReference>
<dbReference type="RefSeq" id="WP_011303923.1">
    <property type="nucleotide sequence ID" value="NC_007350.1"/>
</dbReference>
<dbReference type="SMR" id="Q49UU9"/>
<dbReference type="MEROPS" id="C26.957"/>
<dbReference type="GeneID" id="3616568"/>
<dbReference type="KEGG" id="ssp:SSP2322"/>
<dbReference type="PATRIC" id="fig|342451.11.peg.2311"/>
<dbReference type="eggNOG" id="COG0518">
    <property type="taxonomic scope" value="Bacteria"/>
</dbReference>
<dbReference type="eggNOG" id="COG0519">
    <property type="taxonomic scope" value="Bacteria"/>
</dbReference>
<dbReference type="HOGENOM" id="CLU_014340_0_5_9"/>
<dbReference type="OrthoDB" id="9802219at2"/>
<dbReference type="UniPathway" id="UPA00189">
    <property type="reaction ID" value="UER00296"/>
</dbReference>
<dbReference type="Proteomes" id="UP000006371">
    <property type="component" value="Chromosome"/>
</dbReference>
<dbReference type="GO" id="GO:0005829">
    <property type="term" value="C:cytosol"/>
    <property type="evidence" value="ECO:0007669"/>
    <property type="project" value="TreeGrafter"/>
</dbReference>
<dbReference type="GO" id="GO:0005524">
    <property type="term" value="F:ATP binding"/>
    <property type="evidence" value="ECO:0007669"/>
    <property type="project" value="UniProtKB-UniRule"/>
</dbReference>
<dbReference type="GO" id="GO:0003921">
    <property type="term" value="F:GMP synthase activity"/>
    <property type="evidence" value="ECO:0007669"/>
    <property type="project" value="InterPro"/>
</dbReference>
<dbReference type="CDD" id="cd01742">
    <property type="entry name" value="GATase1_GMP_Synthase"/>
    <property type="match status" value="1"/>
</dbReference>
<dbReference type="CDD" id="cd01997">
    <property type="entry name" value="GMP_synthase_C"/>
    <property type="match status" value="1"/>
</dbReference>
<dbReference type="FunFam" id="3.30.300.10:FF:000002">
    <property type="entry name" value="GMP synthase [glutamine-hydrolyzing]"/>
    <property type="match status" value="1"/>
</dbReference>
<dbReference type="FunFam" id="3.40.50.620:FF:000001">
    <property type="entry name" value="GMP synthase [glutamine-hydrolyzing]"/>
    <property type="match status" value="1"/>
</dbReference>
<dbReference type="FunFam" id="3.40.50.880:FF:000001">
    <property type="entry name" value="GMP synthase [glutamine-hydrolyzing]"/>
    <property type="match status" value="1"/>
</dbReference>
<dbReference type="Gene3D" id="3.30.300.10">
    <property type="match status" value="1"/>
</dbReference>
<dbReference type="Gene3D" id="3.40.50.880">
    <property type="match status" value="1"/>
</dbReference>
<dbReference type="Gene3D" id="3.40.50.620">
    <property type="entry name" value="HUPs"/>
    <property type="match status" value="1"/>
</dbReference>
<dbReference type="HAMAP" id="MF_00344">
    <property type="entry name" value="GMP_synthase"/>
    <property type="match status" value="1"/>
</dbReference>
<dbReference type="InterPro" id="IPR029062">
    <property type="entry name" value="Class_I_gatase-like"/>
</dbReference>
<dbReference type="InterPro" id="IPR017926">
    <property type="entry name" value="GATASE"/>
</dbReference>
<dbReference type="InterPro" id="IPR001674">
    <property type="entry name" value="GMP_synth_C"/>
</dbReference>
<dbReference type="InterPro" id="IPR004739">
    <property type="entry name" value="GMP_synth_GATase"/>
</dbReference>
<dbReference type="InterPro" id="IPR022955">
    <property type="entry name" value="GMP_synthase"/>
</dbReference>
<dbReference type="InterPro" id="IPR025777">
    <property type="entry name" value="GMPS_ATP_PPase_dom"/>
</dbReference>
<dbReference type="InterPro" id="IPR014729">
    <property type="entry name" value="Rossmann-like_a/b/a_fold"/>
</dbReference>
<dbReference type="NCBIfam" id="TIGR00884">
    <property type="entry name" value="guaA_Cterm"/>
    <property type="match status" value="1"/>
</dbReference>
<dbReference type="NCBIfam" id="TIGR00888">
    <property type="entry name" value="guaA_Nterm"/>
    <property type="match status" value="1"/>
</dbReference>
<dbReference type="NCBIfam" id="NF000848">
    <property type="entry name" value="PRK00074.1"/>
    <property type="match status" value="1"/>
</dbReference>
<dbReference type="PANTHER" id="PTHR11922:SF2">
    <property type="entry name" value="GMP SYNTHASE [GLUTAMINE-HYDROLYZING]"/>
    <property type="match status" value="1"/>
</dbReference>
<dbReference type="PANTHER" id="PTHR11922">
    <property type="entry name" value="GMP SYNTHASE-RELATED"/>
    <property type="match status" value="1"/>
</dbReference>
<dbReference type="Pfam" id="PF00117">
    <property type="entry name" value="GATase"/>
    <property type="match status" value="1"/>
</dbReference>
<dbReference type="Pfam" id="PF00958">
    <property type="entry name" value="GMP_synt_C"/>
    <property type="match status" value="1"/>
</dbReference>
<dbReference type="Pfam" id="PF03054">
    <property type="entry name" value="tRNA_Me_trans"/>
    <property type="match status" value="1"/>
</dbReference>
<dbReference type="PRINTS" id="PR00097">
    <property type="entry name" value="ANTSNTHASEII"/>
</dbReference>
<dbReference type="PRINTS" id="PR00099">
    <property type="entry name" value="CPSGATASE"/>
</dbReference>
<dbReference type="PRINTS" id="PR00096">
    <property type="entry name" value="GATASE"/>
</dbReference>
<dbReference type="SUPFAM" id="SSF52402">
    <property type="entry name" value="Adenine nucleotide alpha hydrolases-like"/>
    <property type="match status" value="1"/>
</dbReference>
<dbReference type="SUPFAM" id="SSF52317">
    <property type="entry name" value="Class I glutamine amidotransferase-like"/>
    <property type="match status" value="1"/>
</dbReference>
<dbReference type="SUPFAM" id="SSF54810">
    <property type="entry name" value="GMP synthetase C-terminal dimerisation domain"/>
    <property type="match status" value="1"/>
</dbReference>
<dbReference type="PROSITE" id="PS51273">
    <property type="entry name" value="GATASE_TYPE_1"/>
    <property type="match status" value="1"/>
</dbReference>
<dbReference type="PROSITE" id="PS51553">
    <property type="entry name" value="GMPS_ATP_PPASE"/>
    <property type="match status" value="1"/>
</dbReference>
<comment type="function">
    <text evidence="1">Catalyzes the synthesis of GMP from XMP.</text>
</comment>
<comment type="catalytic activity">
    <reaction evidence="1">
        <text>XMP + L-glutamine + ATP + H2O = GMP + L-glutamate + AMP + diphosphate + 2 H(+)</text>
        <dbReference type="Rhea" id="RHEA:11680"/>
        <dbReference type="ChEBI" id="CHEBI:15377"/>
        <dbReference type="ChEBI" id="CHEBI:15378"/>
        <dbReference type="ChEBI" id="CHEBI:29985"/>
        <dbReference type="ChEBI" id="CHEBI:30616"/>
        <dbReference type="ChEBI" id="CHEBI:33019"/>
        <dbReference type="ChEBI" id="CHEBI:57464"/>
        <dbReference type="ChEBI" id="CHEBI:58115"/>
        <dbReference type="ChEBI" id="CHEBI:58359"/>
        <dbReference type="ChEBI" id="CHEBI:456215"/>
        <dbReference type="EC" id="6.3.5.2"/>
    </reaction>
</comment>
<comment type="pathway">
    <text evidence="1">Purine metabolism; GMP biosynthesis; GMP from XMP (L-Gln route): step 1/1.</text>
</comment>
<comment type="subunit">
    <text evidence="1">Homodimer.</text>
</comment>
<name>GUAA_STAS1</name>
<accession>Q49UU9</accession>
<keyword id="KW-0067">ATP-binding</keyword>
<keyword id="KW-0315">Glutamine amidotransferase</keyword>
<keyword id="KW-0332">GMP biosynthesis</keyword>
<keyword id="KW-0436">Ligase</keyword>
<keyword id="KW-0547">Nucleotide-binding</keyword>
<keyword id="KW-0658">Purine biosynthesis</keyword>
<keyword id="KW-1185">Reference proteome</keyword>
<proteinExistence type="inferred from homology"/>
<reference key="1">
    <citation type="journal article" date="2005" name="Proc. Natl. Acad. Sci. U.S.A.">
        <title>Whole genome sequence of Staphylococcus saprophyticus reveals the pathogenesis of uncomplicated urinary tract infection.</title>
        <authorList>
            <person name="Kuroda M."/>
            <person name="Yamashita A."/>
            <person name="Hirakawa H."/>
            <person name="Kumano M."/>
            <person name="Morikawa K."/>
            <person name="Higashide M."/>
            <person name="Maruyama A."/>
            <person name="Inose Y."/>
            <person name="Matoba K."/>
            <person name="Toh H."/>
            <person name="Kuhara S."/>
            <person name="Hattori M."/>
            <person name="Ohta T."/>
        </authorList>
    </citation>
    <scope>NUCLEOTIDE SEQUENCE [LARGE SCALE GENOMIC DNA]</scope>
    <source>
        <strain>ATCC 15305 / DSM 20229 / NCIMB 8711 / NCTC 7292 / S-41</strain>
    </source>
</reference>
<sequence>MEMAKEQELILVLDFGSQYNQLITRRIREMGVYSELHDHEISMEEIKRLNPKGIILSGGPNSVYEEDSFTIDPEIYNLGVPILGICYGMQLTTKLLGGKVERANEREYGKAIINAKTDELFFGLPEEQNVWMSHSDKVIEIPEGFEVIADSPSTNYAAIEDKSRRIYGVQFHPEVRHTEYGNDLLRNFVRRVCDCIGEWSMENFIEIEIEKIRNQVGDRKVLCAMSGGVDSSVVAVLLHKAIGDQLTCIFVDHGLLRKGEGDMVMEQFGEGFNMNIIRVDAQERFMSKLQGVSDPEQKRKIIGNEFIYVFDDEASKLKGVDFLAQGTLYTDVIESGTKTAQTIKSHHNVGGLPEDMEFQLIEPINTLFKDEVRELGIELGIPEHLVWRQPFPGPGLGIRVLGEITEDKLEIVRESDAILRQVIREEGLEREIWQYFTVLPGIQSVGVMGDYRTYDHTVGIRAVTSIDGMTSDFARIDWEVLQKISSRIVNEVDHVNRVVYDITSKPPSTIEWE</sequence>
<organism>
    <name type="scientific">Staphylococcus saprophyticus subsp. saprophyticus (strain ATCC 15305 / DSM 20229 / NCIMB 8711 / NCTC 7292 / S-41)</name>
    <dbReference type="NCBI Taxonomy" id="342451"/>
    <lineage>
        <taxon>Bacteria</taxon>
        <taxon>Bacillati</taxon>
        <taxon>Bacillota</taxon>
        <taxon>Bacilli</taxon>
        <taxon>Bacillales</taxon>
        <taxon>Staphylococcaceae</taxon>
        <taxon>Staphylococcus</taxon>
    </lineage>
</organism>
<protein>
    <recommendedName>
        <fullName evidence="1">GMP synthase [glutamine-hydrolyzing]</fullName>
        <ecNumber evidence="1">6.3.5.2</ecNumber>
    </recommendedName>
    <alternativeName>
        <fullName evidence="1">GMP synthetase</fullName>
    </alternativeName>
    <alternativeName>
        <fullName evidence="1">Glutamine amidotransferase</fullName>
    </alternativeName>
</protein>
<evidence type="ECO:0000255" key="1">
    <source>
        <dbReference type="HAMAP-Rule" id="MF_00344"/>
    </source>
</evidence>
<gene>
    <name evidence="1" type="primary">guaA</name>
    <name type="ordered locus">SSP2322</name>
</gene>